<sequence length="429" mass="48581">MKKVLSIILGGGAGTRLYPLTKLRAKPAVPVAGKYRLIDIPVSNCINSEIFKIYVLTQFNSASLNRHIARTYNFTGFNEGFVEVLAAQQTPENPNWFQGTADAVRQYLWLMEEWDVEEYLILSGDHLYRMDYRQFIQRHRDTGADITLSVIPIDERRASDFGLMKIDDSGRIIDFSEKPKGEALTQMQVDTSVLGLTKEQAQKQPYIASMGIYVFKKEVLFKLLRESVERTDFGKEIIPDASKDYNVQAYLFDDYWEDIGTIEAFYHANLALTQQPQPPFSFYDEHAPIYTRARYLPPTKLLDCQITESIIGEGCILKNCRIQHSVLGVRSRIESGCVIEESLLMGADFYQASVERQCSLIENDIPVGIGTDTIIRGAIIDKNARIGHDVKIVNKDNVQEAERENQGFYIRSGIVVVLKNAVIPDGTII</sequence>
<gene>
    <name evidence="1" type="primary">glgC</name>
    <name type="ordered locus">Npun_R6087</name>
</gene>
<accession>B2IUY3</accession>
<comment type="function">
    <text evidence="1">Involved in the biosynthesis of ADP-glucose, a building block required for the elongation reactions to produce glycogen. Catalyzes the reaction between ATP and alpha-D-glucose 1-phosphate (G1P) to produce pyrophosphate and ADP-Glc.</text>
</comment>
<comment type="catalytic activity">
    <reaction evidence="1">
        <text>alpha-D-glucose 1-phosphate + ATP + H(+) = ADP-alpha-D-glucose + diphosphate</text>
        <dbReference type="Rhea" id="RHEA:12120"/>
        <dbReference type="ChEBI" id="CHEBI:15378"/>
        <dbReference type="ChEBI" id="CHEBI:30616"/>
        <dbReference type="ChEBI" id="CHEBI:33019"/>
        <dbReference type="ChEBI" id="CHEBI:57498"/>
        <dbReference type="ChEBI" id="CHEBI:58601"/>
        <dbReference type="EC" id="2.7.7.27"/>
    </reaction>
</comment>
<comment type="pathway">
    <text evidence="1">Glycan biosynthesis; glycogen biosynthesis.</text>
</comment>
<comment type="subunit">
    <text evidence="1">Homotetramer.</text>
</comment>
<comment type="similarity">
    <text evidence="1">Belongs to the bacterial/plant glucose-1-phosphate adenylyltransferase family.</text>
</comment>
<evidence type="ECO:0000255" key="1">
    <source>
        <dbReference type="HAMAP-Rule" id="MF_00624"/>
    </source>
</evidence>
<name>GLGC_NOSP7</name>
<protein>
    <recommendedName>
        <fullName evidence="1">Glucose-1-phosphate adenylyltransferase</fullName>
        <ecNumber evidence="1">2.7.7.27</ecNumber>
    </recommendedName>
    <alternativeName>
        <fullName evidence="1">ADP-glucose pyrophosphorylase</fullName>
        <shortName evidence="1">ADPGlc PPase</shortName>
    </alternativeName>
    <alternativeName>
        <fullName evidence="1">ADP-glucose synthase</fullName>
    </alternativeName>
</protein>
<reference key="1">
    <citation type="journal article" date="2013" name="Plant Physiol.">
        <title>A Nostoc punctiforme Sugar Transporter Necessary to Establish a Cyanobacterium-Plant Symbiosis.</title>
        <authorList>
            <person name="Ekman M."/>
            <person name="Picossi S."/>
            <person name="Campbell E.L."/>
            <person name="Meeks J.C."/>
            <person name="Flores E."/>
        </authorList>
    </citation>
    <scope>NUCLEOTIDE SEQUENCE [LARGE SCALE GENOMIC DNA]</scope>
    <source>
        <strain>ATCC 29133 / PCC 73102</strain>
    </source>
</reference>
<organism>
    <name type="scientific">Nostoc punctiforme (strain ATCC 29133 / PCC 73102)</name>
    <dbReference type="NCBI Taxonomy" id="63737"/>
    <lineage>
        <taxon>Bacteria</taxon>
        <taxon>Bacillati</taxon>
        <taxon>Cyanobacteriota</taxon>
        <taxon>Cyanophyceae</taxon>
        <taxon>Nostocales</taxon>
        <taxon>Nostocaceae</taxon>
        <taxon>Nostoc</taxon>
    </lineage>
</organism>
<proteinExistence type="inferred from homology"/>
<dbReference type="EC" id="2.7.7.27" evidence="1"/>
<dbReference type="EMBL" id="CP001037">
    <property type="protein sequence ID" value="ACC84376.1"/>
    <property type="molecule type" value="Genomic_DNA"/>
</dbReference>
<dbReference type="RefSeq" id="WP_012412317.1">
    <property type="nucleotide sequence ID" value="NC_010628.1"/>
</dbReference>
<dbReference type="SMR" id="B2IUY3"/>
<dbReference type="STRING" id="63737.Npun_R6087"/>
<dbReference type="EnsemblBacteria" id="ACC84376">
    <property type="protein sequence ID" value="ACC84376"/>
    <property type="gene ID" value="Npun_R6087"/>
</dbReference>
<dbReference type="KEGG" id="npu:Npun_R6087"/>
<dbReference type="eggNOG" id="COG0448">
    <property type="taxonomic scope" value="Bacteria"/>
</dbReference>
<dbReference type="HOGENOM" id="CLU_029499_14_4_3"/>
<dbReference type="OrthoDB" id="9801810at2"/>
<dbReference type="PhylomeDB" id="B2IUY3"/>
<dbReference type="UniPathway" id="UPA00164"/>
<dbReference type="Proteomes" id="UP000001191">
    <property type="component" value="Chromosome"/>
</dbReference>
<dbReference type="GO" id="GO:0031470">
    <property type="term" value="C:carboxysome"/>
    <property type="evidence" value="ECO:0007669"/>
    <property type="project" value="UniProtKB-ARBA"/>
</dbReference>
<dbReference type="GO" id="GO:0005524">
    <property type="term" value="F:ATP binding"/>
    <property type="evidence" value="ECO:0007669"/>
    <property type="project" value="UniProtKB-KW"/>
</dbReference>
<dbReference type="GO" id="GO:0008878">
    <property type="term" value="F:glucose-1-phosphate adenylyltransferase activity"/>
    <property type="evidence" value="ECO:0007669"/>
    <property type="project" value="UniProtKB-UniRule"/>
</dbReference>
<dbReference type="GO" id="GO:0043886">
    <property type="term" value="F:structural constituent of carboxysome shell"/>
    <property type="evidence" value="ECO:0007669"/>
    <property type="project" value="UniProtKB-ARBA"/>
</dbReference>
<dbReference type="GO" id="GO:0005978">
    <property type="term" value="P:glycogen biosynthetic process"/>
    <property type="evidence" value="ECO:0007669"/>
    <property type="project" value="UniProtKB-UniRule"/>
</dbReference>
<dbReference type="CDD" id="cd02508">
    <property type="entry name" value="ADP_Glucose_PP"/>
    <property type="match status" value="1"/>
</dbReference>
<dbReference type="CDD" id="cd04651">
    <property type="entry name" value="LbH_G1P_AT_C"/>
    <property type="match status" value="1"/>
</dbReference>
<dbReference type="FunFam" id="3.90.550.10:FF:000030">
    <property type="entry name" value="Glucose-1-phosphate adenylyltransferase"/>
    <property type="match status" value="1"/>
</dbReference>
<dbReference type="Gene3D" id="2.160.10.10">
    <property type="entry name" value="Hexapeptide repeat proteins"/>
    <property type="match status" value="1"/>
</dbReference>
<dbReference type="Gene3D" id="3.90.550.10">
    <property type="entry name" value="Spore Coat Polysaccharide Biosynthesis Protein SpsA, Chain A"/>
    <property type="match status" value="1"/>
</dbReference>
<dbReference type="HAMAP" id="MF_00624">
    <property type="entry name" value="GlgC"/>
    <property type="match status" value="1"/>
</dbReference>
<dbReference type="InterPro" id="IPR011831">
    <property type="entry name" value="ADP-Glc_PPase"/>
</dbReference>
<dbReference type="InterPro" id="IPR005836">
    <property type="entry name" value="ADP_Glu_pyroP_CS"/>
</dbReference>
<dbReference type="InterPro" id="IPR023049">
    <property type="entry name" value="GlgC_bac"/>
</dbReference>
<dbReference type="InterPro" id="IPR005835">
    <property type="entry name" value="NTP_transferase_dom"/>
</dbReference>
<dbReference type="InterPro" id="IPR029044">
    <property type="entry name" value="Nucleotide-diphossugar_trans"/>
</dbReference>
<dbReference type="InterPro" id="IPR011004">
    <property type="entry name" value="Trimer_LpxA-like_sf"/>
</dbReference>
<dbReference type="NCBIfam" id="TIGR02091">
    <property type="entry name" value="glgC"/>
    <property type="match status" value="1"/>
</dbReference>
<dbReference type="NCBIfam" id="NF002772">
    <property type="entry name" value="PRK02862.1"/>
    <property type="match status" value="1"/>
</dbReference>
<dbReference type="PANTHER" id="PTHR43523:SF12">
    <property type="entry name" value="GLUCOSE-1-PHOSPHATE ADENYLYLTRANSFERASE LARGE SUBUNIT 1, CHLOROPLASTIC-RELATED"/>
    <property type="match status" value="1"/>
</dbReference>
<dbReference type="PANTHER" id="PTHR43523">
    <property type="entry name" value="GLUCOSE-1-PHOSPHATE ADENYLYLTRANSFERASE-RELATED"/>
    <property type="match status" value="1"/>
</dbReference>
<dbReference type="Pfam" id="PF25247">
    <property type="entry name" value="LbH_GLGC"/>
    <property type="match status" value="1"/>
</dbReference>
<dbReference type="Pfam" id="PF00483">
    <property type="entry name" value="NTP_transferase"/>
    <property type="match status" value="1"/>
</dbReference>
<dbReference type="SUPFAM" id="SSF53448">
    <property type="entry name" value="Nucleotide-diphospho-sugar transferases"/>
    <property type="match status" value="1"/>
</dbReference>
<dbReference type="SUPFAM" id="SSF51161">
    <property type="entry name" value="Trimeric LpxA-like enzymes"/>
    <property type="match status" value="1"/>
</dbReference>
<dbReference type="PROSITE" id="PS00808">
    <property type="entry name" value="ADP_GLC_PYROPHOSPH_1"/>
    <property type="match status" value="1"/>
</dbReference>
<dbReference type="PROSITE" id="PS00809">
    <property type="entry name" value="ADP_GLC_PYROPHOSPH_2"/>
    <property type="match status" value="1"/>
</dbReference>
<dbReference type="PROSITE" id="PS00810">
    <property type="entry name" value="ADP_GLC_PYROPHOSPH_3"/>
    <property type="match status" value="1"/>
</dbReference>
<feature type="chain" id="PRO_1000130493" description="Glucose-1-phosphate adenylyltransferase">
    <location>
        <begin position="1"/>
        <end position="429"/>
    </location>
</feature>
<feature type="binding site" evidence="1">
    <location>
        <position position="162"/>
    </location>
    <ligand>
        <name>alpha-D-glucose 1-phosphate</name>
        <dbReference type="ChEBI" id="CHEBI:58601"/>
    </ligand>
</feature>
<feature type="binding site" evidence="1">
    <location>
        <begin position="177"/>
        <end position="178"/>
    </location>
    <ligand>
        <name>alpha-D-glucose 1-phosphate</name>
        <dbReference type="ChEBI" id="CHEBI:58601"/>
    </ligand>
</feature>
<feature type="binding site" evidence="1">
    <location>
        <position position="209"/>
    </location>
    <ligand>
        <name>alpha-D-glucose 1-phosphate</name>
        <dbReference type="ChEBI" id="CHEBI:58601"/>
    </ligand>
</feature>
<keyword id="KW-0067">ATP-binding</keyword>
<keyword id="KW-0119">Carbohydrate metabolism</keyword>
<keyword id="KW-0320">Glycogen biosynthesis</keyword>
<keyword id="KW-0321">Glycogen metabolism</keyword>
<keyword id="KW-0547">Nucleotide-binding</keyword>
<keyword id="KW-0548">Nucleotidyltransferase</keyword>
<keyword id="KW-1185">Reference proteome</keyword>
<keyword id="KW-0808">Transferase</keyword>